<keyword id="KW-0378">Hydrolase</keyword>
<keyword id="KW-0479">Metal-binding</keyword>
<keyword id="KW-0546">Nucleotide metabolism</keyword>
<keyword id="KW-0862">Zinc</keyword>
<proteinExistence type="inferred from homology"/>
<evidence type="ECO:0000255" key="1">
    <source>
        <dbReference type="HAMAP-Rule" id="MF_00540"/>
    </source>
</evidence>
<sequence length="331" mass="36231">MIDTSIPLVDLHRHLDGNVRVNTIWELGHQHGIALPADSLETLAPFVQIQGKETSLVAFLKKLDWMVAVLADLDAVKRVAYENVADAALSGLDYAELRFSPYYMAMNHKLPIEGVVEAVVDGVKAGLKDYNVKINLIGIMSRSFGQAACTQELEGLLAHKQHLVAMDLAGDELGFPGELFNDHFKRVRDAGLAITAHAGEAAGSQSMWQAIQELGATRIGHGVNAIHDPKLMEYLAKHRIGIESCPTSNLHTSTVVSYAEHPFRTFMDAGVLISLNTDDPGVSAIDIKHEYRIAKSELKLTDAELARVQRNGVEMAFLSDSERKALYAAKI</sequence>
<protein>
    <recommendedName>
        <fullName evidence="1">Adenosine deaminase</fullName>
        <ecNumber evidence="1">3.5.4.4</ecNumber>
    </recommendedName>
    <alternativeName>
        <fullName evidence="1">Adenosine aminohydrolase</fullName>
    </alternativeName>
</protein>
<organism>
    <name type="scientific">Shewanella putrefaciens (strain CN-32 / ATCC BAA-453)</name>
    <dbReference type="NCBI Taxonomy" id="319224"/>
    <lineage>
        <taxon>Bacteria</taxon>
        <taxon>Pseudomonadati</taxon>
        <taxon>Pseudomonadota</taxon>
        <taxon>Gammaproteobacteria</taxon>
        <taxon>Alteromonadales</taxon>
        <taxon>Shewanellaceae</taxon>
        <taxon>Shewanella</taxon>
    </lineage>
</organism>
<accession>A4YCD7</accession>
<feature type="chain" id="PRO_1000017699" description="Adenosine deaminase">
    <location>
        <begin position="1"/>
        <end position="331"/>
    </location>
</feature>
<feature type="active site" description="Proton donor" evidence="1">
    <location>
        <position position="200"/>
    </location>
</feature>
<feature type="binding site" evidence="1">
    <location>
        <position position="12"/>
    </location>
    <ligand>
        <name>Zn(2+)</name>
        <dbReference type="ChEBI" id="CHEBI:29105"/>
        <note>catalytic</note>
    </ligand>
</feature>
<feature type="binding site" evidence="1">
    <location>
        <position position="14"/>
    </location>
    <ligand>
        <name>substrate</name>
    </ligand>
</feature>
<feature type="binding site" evidence="1">
    <location>
        <position position="14"/>
    </location>
    <ligand>
        <name>Zn(2+)</name>
        <dbReference type="ChEBI" id="CHEBI:29105"/>
        <note>catalytic</note>
    </ligand>
</feature>
<feature type="binding site" evidence="1">
    <location>
        <position position="16"/>
    </location>
    <ligand>
        <name>substrate</name>
    </ligand>
</feature>
<feature type="binding site" evidence="1">
    <location>
        <position position="170"/>
    </location>
    <ligand>
        <name>substrate</name>
    </ligand>
</feature>
<feature type="binding site" evidence="1">
    <location>
        <position position="197"/>
    </location>
    <ligand>
        <name>Zn(2+)</name>
        <dbReference type="ChEBI" id="CHEBI:29105"/>
        <note>catalytic</note>
    </ligand>
</feature>
<feature type="binding site" evidence="1">
    <location>
        <position position="278"/>
    </location>
    <ligand>
        <name>Zn(2+)</name>
        <dbReference type="ChEBI" id="CHEBI:29105"/>
        <note>catalytic</note>
    </ligand>
</feature>
<feature type="binding site" evidence="1">
    <location>
        <position position="279"/>
    </location>
    <ligand>
        <name>substrate</name>
    </ligand>
</feature>
<feature type="site" description="Important for catalytic activity" evidence="1">
    <location>
        <position position="221"/>
    </location>
</feature>
<reference key="1">
    <citation type="submission" date="2007-04" db="EMBL/GenBank/DDBJ databases">
        <title>Complete sequence of Shewanella putrefaciens CN-32.</title>
        <authorList>
            <consortium name="US DOE Joint Genome Institute"/>
            <person name="Copeland A."/>
            <person name="Lucas S."/>
            <person name="Lapidus A."/>
            <person name="Barry K."/>
            <person name="Detter J.C."/>
            <person name="Glavina del Rio T."/>
            <person name="Hammon N."/>
            <person name="Israni S."/>
            <person name="Dalin E."/>
            <person name="Tice H."/>
            <person name="Pitluck S."/>
            <person name="Chain P."/>
            <person name="Malfatti S."/>
            <person name="Shin M."/>
            <person name="Vergez L."/>
            <person name="Schmutz J."/>
            <person name="Larimer F."/>
            <person name="Land M."/>
            <person name="Hauser L."/>
            <person name="Kyrpides N."/>
            <person name="Mikhailova N."/>
            <person name="Romine M.F."/>
            <person name="Fredrickson J."/>
            <person name="Tiedje J."/>
            <person name="Richardson P."/>
        </authorList>
    </citation>
    <scope>NUCLEOTIDE SEQUENCE [LARGE SCALE GENOMIC DNA]</scope>
    <source>
        <strain>CN-32 / ATCC BAA-453</strain>
    </source>
</reference>
<dbReference type="EC" id="3.5.4.4" evidence="1"/>
<dbReference type="EMBL" id="CP000681">
    <property type="protein sequence ID" value="ABP77620.1"/>
    <property type="molecule type" value="Genomic_DNA"/>
</dbReference>
<dbReference type="SMR" id="A4YCD7"/>
<dbReference type="STRING" id="319224.Sputcn32_3914"/>
<dbReference type="KEGG" id="spc:Sputcn32_3914"/>
<dbReference type="eggNOG" id="COG1816">
    <property type="taxonomic scope" value="Bacteria"/>
</dbReference>
<dbReference type="HOGENOM" id="CLU_039228_0_2_6"/>
<dbReference type="GO" id="GO:0005829">
    <property type="term" value="C:cytosol"/>
    <property type="evidence" value="ECO:0007669"/>
    <property type="project" value="TreeGrafter"/>
</dbReference>
<dbReference type="GO" id="GO:0046936">
    <property type="term" value="F:2'-deoxyadenosine deaminase activity"/>
    <property type="evidence" value="ECO:0007669"/>
    <property type="project" value="RHEA"/>
</dbReference>
<dbReference type="GO" id="GO:0004000">
    <property type="term" value="F:adenosine deaminase activity"/>
    <property type="evidence" value="ECO:0007669"/>
    <property type="project" value="UniProtKB-UniRule"/>
</dbReference>
<dbReference type="GO" id="GO:0008270">
    <property type="term" value="F:zinc ion binding"/>
    <property type="evidence" value="ECO:0007669"/>
    <property type="project" value="UniProtKB-UniRule"/>
</dbReference>
<dbReference type="GO" id="GO:0006154">
    <property type="term" value="P:adenosine catabolic process"/>
    <property type="evidence" value="ECO:0007669"/>
    <property type="project" value="TreeGrafter"/>
</dbReference>
<dbReference type="GO" id="GO:0043103">
    <property type="term" value="P:hypoxanthine salvage"/>
    <property type="evidence" value="ECO:0007669"/>
    <property type="project" value="TreeGrafter"/>
</dbReference>
<dbReference type="GO" id="GO:0046103">
    <property type="term" value="P:inosine biosynthetic process"/>
    <property type="evidence" value="ECO:0007669"/>
    <property type="project" value="TreeGrafter"/>
</dbReference>
<dbReference type="GO" id="GO:0009117">
    <property type="term" value="P:nucleotide metabolic process"/>
    <property type="evidence" value="ECO:0007669"/>
    <property type="project" value="UniProtKB-KW"/>
</dbReference>
<dbReference type="GO" id="GO:0009168">
    <property type="term" value="P:purine ribonucleoside monophosphate biosynthetic process"/>
    <property type="evidence" value="ECO:0007669"/>
    <property type="project" value="UniProtKB-UniRule"/>
</dbReference>
<dbReference type="FunFam" id="3.20.20.140:FF:000009">
    <property type="entry name" value="Adenosine deaminase"/>
    <property type="match status" value="1"/>
</dbReference>
<dbReference type="Gene3D" id="3.20.20.140">
    <property type="entry name" value="Metal-dependent hydrolases"/>
    <property type="match status" value="1"/>
</dbReference>
<dbReference type="HAMAP" id="MF_00540">
    <property type="entry name" value="A_deaminase"/>
    <property type="match status" value="1"/>
</dbReference>
<dbReference type="InterPro" id="IPR006650">
    <property type="entry name" value="A/AMP_deam_AS"/>
</dbReference>
<dbReference type="InterPro" id="IPR028893">
    <property type="entry name" value="A_deaminase"/>
</dbReference>
<dbReference type="InterPro" id="IPR001365">
    <property type="entry name" value="A_deaminase_dom"/>
</dbReference>
<dbReference type="InterPro" id="IPR006330">
    <property type="entry name" value="Ado/ade_deaminase"/>
</dbReference>
<dbReference type="InterPro" id="IPR032466">
    <property type="entry name" value="Metal_Hydrolase"/>
</dbReference>
<dbReference type="NCBIfam" id="TIGR01430">
    <property type="entry name" value="aden_deam"/>
    <property type="match status" value="1"/>
</dbReference>
<dbReference type="NCBIfam" id="NF006846">
    <property type="entry name" value="PRK09358.1-1"/>
    <property type="match status" value="1"/>
</dbReference>
<dbReference type="PANTHER" id="PTHR11409">
    <property type="entry name" value="ADENOSINE DEAMINASE"/>
    <property type="match status" value="1"/>
</dbReference>
<dbReference type="PANTHER" id="PTHR11409:SF43">
    <property type="entry name" value="ADENOSINE DEAMINASE"/>
    <property type="match status" value="1"/>
</dbReference>
<dbReference type="Pfam" id="PF00962">
    <property type="entry name" value="A_deaminase"/>
    <property type="match status" value="1"/>
</dbReference>
<dbReference type="SUPFAM" id="SSF51556">
    <property type="entry name" value="Metallo-dependent hydrolases"/>
    <property type="match status" value="1"/>
</dbReference>
<dbReference type="PROSITE" id="PS00485">
    <property type="entry name" value="A_DEAMINASE"/>
    <property type="match status" value="1"/>
</dbReference>
<gene>
    <name evidence="1" type="primary">add</name>
    <name type="ordered locus">Sputcn32_3914</name>
</gene>
<name>ADD_SHEPC</name>
<comment type="function">
    <text evidence="1">Catalyzes the hydrolytic deamination of adenosine and 2-deoxyadenosine.</text>
</comment>
<comment type="catalytic activity">
    <reaction evidence="1">
        <text>adenosine + H2O + H(+) = inosine + NH4(+)</text>
        <dbReference type="Rhea" id="RHEA:24408"/>
        <dbReference type="ChEBI" id="CHEBI:15377"/>
        <dbReference type="ChEBI" id="CHEBI:15378"/>
        <dbReference type="ChEBI" id="CHEBI:16335"/>
        <dbReference type="ChEBI" id="CHEBI:17596"/>
        <dbReference type="ChEBI" id="CHEBI:28938"/>
        <dbReference type="EC" id="3.5.4.4"/>
    </reaction>
    <physiologicalReaction direction="left-to-right" evidence="1">
        <dbReference type="Rhea" id="RHEA:24409"/>
    </physiologicalReaction>
</comment>
<comment type="catalytic activity">
    <reaction evidence="1">
        <text>2'-deoxyadenosine + H2O + H(+) = 2'-deoxyinosine + NH4(+)</text>
        <dbReference type="Rhea" id="RHEA:28190"/>
        <dbReference type="ChEBI" id="CHEBI:15377"/>
        <dbReference type="ChEBI" id="CHEBI:15378"/>
        <dbReference type="ChEBI" id="CHEBI:17256"/>
        <dbReference type="ChEBI" id="CHEBI:28938"/>
        <dbReference type="ChEBI" id="CHEBI:28997"/>
        <dbReference type="EC" id="3.5.4.4"/>
    </reaction>
    <physiologicalReaction direction="left-to-right" evidence="1">
        <dbReference type="Rhea" id="RHEA:28191"/>
    </physiologicalReaction>
</comment>
<comment type="cofactor">
    <cofactor evidence="1">
        <name>Zn(2+)</name>
        <dbReference type="ChEBI" id="CHEBI:29105"/>
    </cofactor>
    <text evidence="1">Binds 1 zinc ion per subunit.</text>
</comment>
<comment type="similarity">
    <text evidence="1">Belongs to the metallo-dependent hydrolases superfamily. Adenosine and AMP deaminases family. Adenosine deaminase subfamily.</text>
</comment>